<proteinExistence type="inferred from homology"/>
<organism>
    <name type="scientific">Escherichia coli O6:H1 (strain CFT073 / ATCC 700928 / UPEC)</name>
    <dbReference type="NCBI Taxonomy" id="199310"/>
    <lineage>
        <taxon>Bacteria</taxon>
        <taxon>Pseudomonadati</taxon>
        <taxon>Pseudomonadota</taxon>
        <taxon>Gammaproteobacteria</taxon>
        <taxon>Enterobacterales</taxon>
        <taxon>Enterobacteriaceae</taxon>
        <taxon>Escherichia</taxon>
    </lineage>
</organism>
<accession>Q8FB69</accession>
<name>PUR2_ECOL6</name>
<gene>
    <name evidence="2" type="primary">purD</name>
    <name type="ordered locus">c4963</name>
</gene>
<keyword id="KW-0067">ATP-binding</keyword>
<keyword id="KW-0436">Ligase</keyword>
<keyword id="KW-0460">Magnesium</keyword>
<keyword id="KW-0464">Manganese</keyword>
<keyword id="KW-0479">Metal-binding</keyword>
<keyword id="KW-0547">Nucleotide-binding</keyword>
<keyword id="KW-0658">Purine biosynthesis</keyword>
<keyword id="KW-1185">Reference proteome</keyword>
<evidence type="ECO:0000250" key="1"/>
<evidence type="ECO:0000255" key="2">
    <source>
        <dbReference type="HAMAP-Rule" id="MF_00138"/>
    </source>
</evidence>
<evidence type="ECO:0000256" key="3">
    <source>
        <dbReference type="SAM" id="MobiDB-lite"/>
    </source>
</evidence>
<feature type="chain" id="PRO_0000151449" description="Phosphoribosylamine--glycine ligase">
    <location>
        <begin position="1"/>
        <end position="429"/>
    </location>
</feature>
<feature type="domain" description="ATP-grasp" evidence="2">
    <location>
        <begin position="109"/>
        <end position="316"/>
    </location>
</feature>
<feature type="region of interest" description="Disordered" evidence="3">
    <location>
        <begin position="212"/>
        <end position="236"/>
    </location>
</feature>
<feature type="compositionally biased region" description="Basic and acidic residues" evidence="3">
    <location>
        <begin position="213"/>
        <end position="223"/>
    </location>
</feature>
<feature type="binding site" evidence="2">
    <location>
        <begin position="135"/>
        <end position="196"/>
    </location>
    <ligand>
        <name>ATP</name>
        <dbReference type="ChEBI" id="CHEBI:30616"/>
    </ligand>
</feature>
<feature type="binding site" evidence="2">
    <location>
        <position position="286"/>
    </location>
    <ligand>
        <name>Mg(2+)</name>
        <dbReference type="ChEBI" id="CHEBI:18420"/>
    </ligand>
</feature>
<feature type="binding site" evidence="2">
    <location>
        <position position="288"/>
    </location>
    <ligand>
        <name>Mg(2+)</name>
        <dbReference type="ChEBI" id="CHEBI:18420"/>
    </ligand>
</feature>
<protein>
    <recommendedName>
        <fullName evidence="2">Phosphoribosylamine--glycine ligase</fullName>
        <ecNumber evidence="2">6.3.4.13</ecNumber>
    </recommendedName>
    <alternativeName>
        <fullName evidence="2">GARS</fullName>
    </alternativeName>
    <alternativeName>
        <fullName evidence="2">Glycinamide ribonucleotide synthetase</fullName>
    </alternativeName>
    <alternativeName>
        <fullName evidence="2">Phosphoribosylglycinamide synthetase</fullName>
    </alternativeName>
</protein>
<dbReference type="EC" id="6.3.4.13" evidence="2"/>
<dbReference type="EMBL" id="AE014075">
    <property type="protein sequence ID" value="AAN83391.1"/>
    <property type="molecule type" value="Genomic_DNA"/>
</dbReference>
<dbReference type="RefSeq" id="WP_000866837.1">
    <property type="nucleotide sequence ID" value="NZ_CP051263.1"/>
</dbReference>
<dbReference type="SMR" id="Q8FB69"/>
<dbReference type="STRING" id="199310.c4963"/>
<dbReference type="KEGG" id="ecc:c4963"/>
<dbReference type="eggNOG" id="COG0151">
    <property type="taxonomic scope" value="Bacteria"/>
</dbReference>
<dbReference type="HOGENOM" id="CLU_027420_3_1_6"/>
<dbReference type="BioCyc" id="ECOL199310:C4963-MONOMER"/>
<dbReference type="UniPathway" id="UPA00074">
    <property type="reaction ID" value="UER00125"/>
</dbReference>
<dbReference type="Proteomes" id="UP000001410">
    <property type="component" value="Chromosome"/>
</dbReference>
<dbReference type="GO" id="GO:0005524">
    <property type="term" value="F:ATP binding"/>
    <property type="evidence" value="ECO:0007669"/>
    <property type="project" value="UniProtKB-KW"/>
</dbReference>
<dbReference type="GO" id="GO:0046872">
    <property type="term" value="F:metal ion binding"/>
    <property type="evidence" value="ECO:0007669"/>
    <property type="project" value="UniProtKB-KW"/>
</dbReference>
<dbReference type="GO" id="GO:0004637">
    <property type="term" value="F:phosphoribosylamine-glycine ligase activity"/>
    <property type="evidence" value="ECO:0007669"/>
    <property type="project" value="UniProtKB-UniRule"/>
</dbReference>
<dbReference type="GO" id="GO:0006189">
    <property type="term" value="P:'de novo' IMP biosynthetic process"/>
    <property type="evidence" value="ECO:0007669"/>
    <property type="project" value="UniProtKB-UniRule"/>
</dbReference>
<dbReference type="GO" id="GO:0009113">
    <property type="term" value="P:purine nucleobase biosynthetic process"/>
    <property type="evidence" value="ECO:0007669"/>
    <property type="project" value="InterPro"/>
</dbReference>
<dbReference type="FunFam" id="3.30.470.20:FF:000031">
    <property type="entry name" value="Phosphoribosylamine--glycine ligase"/>
    <property type="match status" value="1"/>
</dbReference>
<dbReference type="FunFam" id="3.40.50.20:FF:000006">
    <property type="entry name" value="Phosphoribosylamine--glycine ligase, chloroplastic"/>
    <property type="match status" value="1"/>
</dbReference>
<dbReference type="FunFam" id="3.30.1490.20:FF:000006">
    <property type="entry name" value="phosphoribosylamine--glycine ligase, chloroplastic-like"/>
    <property type="match status" value="1"/>
</dbReference>
<dbReference type="FunFam" id="3.90.600.10:FF:000001">
    <property type="entry name" value="Trifunctional purine biosynthetic protein adenosine-3"/>
    <property type="match status" value="1"/>
</dbReference>
<dbReference type="Gene3D" id="3.40.50.20">
    <property type="match status" value="1"/>
</dbReference>
<dbReference type="Gene3D" id="3.30.1490.20">
    <property type="entry name" value="ATP-grasp fold, A domain"/>
    <property type="match status" value="1"/>
</dbReference>
<dbReference type="Gene3D" id="3.30.470.20">
    <property type="entry name" value="ATP-grasp fold, B domain"/>
    <property type="match status" value="1"/>
</dbReference>
<dbReference type="Gene3D" id="3.90.600.10">
    <property type="entry name" value="Phosphoribosylglycinamide synthetase, C-terminal domain"/>
    <property type="match status" value="1"/>
</dbReference>
<dbReference type="HAMAP" id="MF_00138">
    <property type="entry name" value="GARS"/>
    <property type="match status" value="1"/>
</dbReference>
<dbReference type="InterPro" id="IPR011761">
    <property type="entry name" value="ATP-grasp"/>
</dbReference>
<dbReference type="InterPro" id="IPR013815">
    <property type="entry name" value="ATP_grasp_subdomain_1"/>
</dbReference>
<dbReference type="InterPro" id="IPR016185">
    <property type="entry name" value="PreATP-grasp_dom_sf"/>
</dbReference>
<dbReference type="InterPro" id="IPR020561">
    <property type="entry name" value="PRibGlycinamid_synth_ATP-grasp"/>
</dbReference>
<dbReference type="InterPro" id="IPR000115">
    <property type="entry name" value="PRibGlycinamide_synth"/>
</dbReference>
<dbReference type="InterPro" id="IPR020560">
    <property type="entry name" value="PRibGlycinamide_synth_C-dom"/>
</dbReference>
<dbReference type="InterPro" id="IPR037123">
    <property type="entry name" value="PRibGlycinamide_synth_C_sf"/>
</dbReference>
<dbReference type="InterPro" id="IPR020559">
    <property type="entry name" value="PRibGlycinamide_synth_CS"/>
</dbReference>
<dbReference type="InterPro" id="IPR020562">
    <property type="entry name" value="PRibGlycinamide_synth_N"/>
</dbReference>
<dbReference type="InterPro" id="IPR011054">
    <property type="entry name" value="Rudment_hybrid_motif"/>
</dbReference>
<dbReference type="NCBIfam" id="TIGR00877">
    <property type="entry name" value="purD"/>
    <property type="match status" value="1"/>
</dbReference>
<dbReference type="PANTHER" id="PTHR43472">
    <property type="entry name" value="PHOSPHORIBOSYLAMINE--GLYCINE LIGASE"/>
    <property type="match status" value="1"/>
</dbReference>
<dbReference type="PANTHER" id="PTHR43472:SF1">
    <property type="entry name" value="PHOSPHORIBOSYLAMINE--GLYCINE LIGASE, CHLOROPLASTIC"/>
    <property type="match status" value="1"/>
</dbReference>
<dbReference type="Pfam" id="PF01071">
    <property type="entry name" value="GARS_A"/>
    <property type="match status" value="1"/>
</dbReference>
<dbReference type="Pfam" id="PF02843">
    <property type="entry name" value="GARS_C"/>
    <property type="match status" value="1"/>
</dbReference>
<dbReference type="Pfam" id="PF02844">
    <property type="entry name" value="GARS_N"/>
    <property type="match status" value="1"/>
</dbReference>
<dbReference type="SMART" id="SM01209">
    <property type="entry name" value="GARS_A"/>
    <property type="match status" value="1"/>
</dbReference>
<dbReference type="SMART" id="SM01210">
    <property type="entry name" value="GARS_C"/>
    <property type="match status" value="1"/>
</dbReference>
<dbReference type="SUPFAM" id="SSF56059">
    <property type="entry name" value="Glutathione synthetase ATP-binding domain-like"/>
    <property type="match status" value="1"/>
</dbReference>
<dbReference type="SUPFAM" id="SSF52440">
    <property type="entry name" value="PreATP-grasp domain"/>
    <property type="match status" value="1"/>
</dbReference>
<dbReference type="SUPFAM" id="SSF51246">
    <property type="entry name" value="Rudiment single hybrid motif"/>
    <property type="match status" value="1"/>
</dbReference>
<dbReference type="PROSITE" id="PS50975">
    <property type="entry name" value="ATP_GRASP"/>
    <property type="match status" value="1"/>
</dbReference>
<dbReference type="PROSITE" id="PS00184">
    <property type="entry name" value="GARS"/>
    <property type="match status" value="1"/>
</dbReference>
<sequence>MKVLVIGNGGREHALAWKAAQSPLVETVFVAPGNAGTALEPALQNVAIGVTDIPALLDFAQNEKVDLTIVGPEAPLVKGVVDTFRAAGLKIFGPTAGAAQLEGSKAFTKDFLARHNIPTAEYQNFTEVEPALAYLREKGAPIVIKADGLAAGKGVIVAMTLEEAEAAVRDMLAGNAFGDAGHRIVIEEFLDGEEASFIVMVDGEHVLPMATSQDHKRVGDKDTGPNTGGMGAYSPAPVVTDEVHQRTMERIIWPTVKGMAAEGNTYTGFLYAGLMIDKQGNPKVIEFNCRFGDPETQPIMLRMKSDLVELCLAACEGKLDEKTSEWDERASLGVVMAAGGYPGDYRTGDVIHGLPLEEVADGKVFHAGTKLADDEQVVTSGGRVLCVTALGHTVAEAQKRAYALMTDIHWDDCFCRKDIGWRAIEREQN</sequence>
<comment type="catalytic activity">
    <reaction evidence="2">
        <text>5-phospho-beta-D-ribosylamine + glycine + ATP = N(1)-(5-phospho-beta-D-ribosyl)glycinamide + ADP + phosphate + H(+)</text>
        <dbReference type="Rhea" id="RHEA:17453"/>
        <dbReference type="ChEBI" id="CHEBI:15378"/>
        <dbReference type="ChEBI" id="CHEBI:30616"/>
        <dbReference type="ChEBI" id="CHEBI:43474"/>
        <dbReference type="ChEBI" id="CHEBI:57305"/>
        <dbReference type="ChEBI" id="CHEBI:58681"/>
        <dbReference type="ChEBI" id="CHEBI:143788"/>
        <dbReference type="ChEBI" id="CHEBI:456216"/>
        <dbReference type="EC" id="6.3.4.13"/>
    </reaction>
</comment>
<comment type="cofactor">
    <cofactor evidence="1">
        <name>Mg(2+)</name>
        <dbReference type="ChEBI" id="CHEBI:18420"/>
    </cofactor>
    <cofactor evidence="1">
        <name>Mn(2+)</name>
        <dbReference type="ChEBI" id="CHEBI:29035"/>
    </cofactor>
    <text evidence="1">Binds 1 Mg(2+) or Mn(2+) ion per subunit.</text>
</comment>
<comment type="pathway">
    <text evidence="2">Purine metabolism; IMP biosynthesis via de novo pathway; N(1)-(5-phospho-D-ribosyl)glycinamide from 5-phospho-alpha-D-ribose 1-diphosphate: step 2/2.</text>
</comment>
<comment type="subunit">
    <text evidence="2">Monomer.</text>
</comment>
<comment type="similarity">
    <text evidence="2">Belongs to the GARS family.</text>
</comment>
<reference key="1">
    <citation type="journal article" date="2002" name="Proc. Natl. Acad. Sci. U.S.A.">
        <title>Extensive mosaic structure revealed by the complete genome sequence of uropathogenic Escherichia coli.</title>
        <authorList>
            <person name="Welch R.A."/>
            <person name="Burland V."/>
            <person name="Plunkett G. III"/>
            <person name="Redford P."/>
            <person name="Roesch P."/>
            <person name="Rasko D."/>
            <person name="Buckles E.L."/>
            <person name="Liou S.-R."/>
            <person name="Boutin A."/>
            <person name="Hackett J."/>
            <person name="Stroud D."/>
            <person name="Mayhew G.F."/>
            <person name="Rose D.J."/>
            <person name="Zhou S."/>
            <person name="Schwartz D.C."/>
            <person name="Perna N.T."/>
            <person name="Mobley H.L.T."/>
            <person name="Donnenberg M.S."/>
            <person name="Blattner F.R."/>
        </authorList>
    </citation>
    <scope>NUCLEOTIDE SEQUENCE [LARGE SCALE GENOMIC DNA]</scope>
    <source>
        <strain>CFT073 / ATCC 700928 / UPEC</strain>
    </source>
</reference>